<gene>
    <name evidence="1" type="primary">ureC</name>
    <name type="ordered locus">Rsph17025_0988</name>
</gene>
<evidence type="ECO:0000255" key="1">
    <source>
        <dbReference type="HAMAP-Rule" id="MF_01953"/>
    </source>
</evidence>
<organism>
    <name type="scientific">Cereibacter sphaeroides (strain ATCC 17025 / ATH 2.4.3)</name>
    <name type="common">Rhodobacter sphaeroides</name>
    <dbReference type="NCBI Taxonomy" id="349102"/>
    <lineage>
        <taxon>Bacteria</taxon>
        <taxon>Pseudomonadati</taxon>
        <taxon>Pseudomonadota</taxon>
        <taxon>Alphaproteobacteria</taxon>
        <taxon>Rhodobacterales</taxon>
        <taxon>Paracoccaceae</taxon>
        <taxon>Cereibacter</taxon>
    </lineage>
</organism>
<protein>
    <recommendedName>
        <fullName evidence="1">Urease subunit alpha</fullName>
        <ecNumber evidence="1">3.5.1.5</ecNumber>
    </recommendedName>
    <alternativeName>
        <fullName evidence="1">Urea amidohydrolase subunit alpha</fullName>
    </alternativeName>
</protein>
<keyword id="KW-0963">Cytoplasm</keyword>
<keyword id="KW-0378">Hydrolase</keyword>
<keyword id="KW-0479">Metal-binding</keyword>
<keyword id="KW-0533">Nickel</keyword>
<feature type="chain" id="PRO_1000070692" description="Urease subunit alpha">
    <location>
        <begin position="1"/>
        <end position="568"/>
    </location>
</feature>
<feature type="domain" description="Urease" evidence="1">
    <location>
        <begin position="131"/>
        <end position="568"/>
    </location>
</feature>
<feature type="active site" description="Proton donor" evidence="1">
    <location>
        <position position="322"/>
    </location>
</feature>
<feature type="binding site" evidence="1">
    <location>
        <position position="136"/>
    </location>
    <ligand>
        <name>Ni(2+)</name>
        <dbReference type="ChEBI" id="CHEBI:49786"/>
        <label>1</label>
    </ligand>
</feature>
<feature type="binding site" evidence="1">
    <location>
        <position position="138"/>
    </location>
    <ligand>
        <name>Ni(2+)</name>
        <dbReference type="ChEBI" id="CHEBI:49786"/>
        <label>1</label>
    </ligand>
</feature>
<feature type="binding site" description="via carbamate group" evidence="1">
    <location>
        <position position="219"/>
    </location>
    <ligand>
        <name>Ni(2+)</name>
        <dbReference type="ChEBI" id="CHEBI:49786"/>
        <label>1</label>
    </ligand>
</feature>
<feature type="binding site" description="via carbamate group" evidence="1">
    <location>
        <position position="219"/>
    </location>
    <ligand>
        <name>Ni(2+)</name>
        <dbReference type="ChEBI" id="CHEBI:49786"/>
        <label>2</label>
    </ligand>
</feature>
<feature type="binding site" evidence="1">
    <location>
        <position position="221"/>
    </location>
    <ligand>
        <name>substrate</name>
    </ligand>
</feature>
<feature type="binding site" evidence="1">
    <location>
        <position position="248"/>
    </location>
    <ligand>
        <name>Ni(2+)</name>
        <dbReference type="ChEBI" id="CHEBI:49786"/>
        <label>2</label>
    </ligand>
</feature>
<feature type="binding site" evidence="1">
    <location>
        <position position="274"/>
    </location>
    <ligand>
        <name>Ni(2+)</name>
        <dbReference type="ChEBI" id="CHEBI:49786"/>
        <label>2</label>
    </ligand>
</feature>
<feature type="binding site" evidence="1">
    <location>
        <position position="362"/>
    </location>
    <ligand>
        <name>Ni(2+)</name>
        <dbReference type="ChEBI" id="CHEBI:49786"/>
        <label>1</label>
    </ligand>
</feature>
<feature type="modified residue" description="N6-carboxylysine" evidence="1">
    <location>
        <position position="219"/>
    </location>
</feature>
<reference key="1">
    <citation type="submission" date="2007-04" db="EMBL/GenBank/DDBJ databases">
        <title>Complete sequence of chromosome of Rhodobacter sphaeroides ATCC 17025.</title>
        <authorList>
            <consortium name="US DOE Joint Genome Institute"/>
            <person name="Copeland A."/>
            <person name="Lucas S."/>
            <person name="Lapidus A."/>
            <person name="Barry K."/>
            <person name="Detter J.C."/>
            <person name="Glavina del Rio T."/>
            <person name="Hammon N."/>
            <person name="Israni S."/>
            <person name="Dalin E."/>
            <person name="Tice H."/>
            <person name="Pitluck S."/>
            <person name="Chertkov O."/>
            <person name="Brettin T."/>
            <person name="Bruce D."/>
            <person name="Han C."/>
            <person name="Schmutz J."/>
            <person name="Larimer F."/>
            <person name="Land M."/>
            <person name="Hauser L."/>
            <person name="Kyrpides N."/>
            <person name="Kim E."/>
            <person name="Richardson P."/>
            <person name="Mackenzie C."/>
            <person name="Choudhary M."/>
            <person name="Donohue T.J."/>
            <person name="Kaplan S."/>
        </authorList>
    </citation>
    <scope>NUCLEOTIDE SEQUENCE [LARGE SCALE GENOMIC DNA]</scope>
    <source>
        <strain>ATCC 17025 / ATH 2.4.3</strain>
    </source>
</reference>
<dbReference type="EC" id="3.5.1.5" evidence="1"/>
<dbReference type="EMBL" id="CP000661">
    <property type="protein sequence ID" value="ABP69889.1"/>
    <property type="molecule type" value="Genomic_DNA"/>
</dbReference>
<dbReference type="SMR" id="A4WR75"/>
<dbReference type="STRING" id="349102.Rsph17025_0988"/>
<dbReference type="MEROPS" id="M38.982"/>
<dbReference type="KEGG" id="rsq:Rsph17025_0988"/>
<dbReference type="eggNOG" id="COG0804">
    <property type="taxonomic scope" value="Bacteria"/>
</dbReference>
<dbReference type="HOGENOM" id="CLU_000980_0_0_5"/>
<dbReference type="BioCyc" id="RSPH349102:G1G8M-1014-MONOMER"/>
<dbReference type="UniPathway" id="UPA00258">
    <property type="reaction ID" value="UER00370"/>
</dbReference>
<dbReference type="GO" id="GO:0005737">
    <property type="term" value="C:cytoplasm"/>
    <property type="evidence" value="ECO:0007669"/>
    <property type="project" value="UniProtKB-SubCell"/>
</dbReference>
<dbReference type="GO" id="GO:0016151">
    <property type="term" value="F:nickel cation binding"/>
    <property type="evidence" value="ECO:0007669"/>
    <property type="project" value="UniProtKB-UniRule"/>
</dbReference>
<dbReference type="GO" id="GO:0009039">
    <property type="term" value="F:urease activity"/>
    <property type="evidence" value="ECO:0007669"/>
    <property type="project" value="UniProtKB-UniRule"/>
</dbReference>
<dbReference type="GO" id="GO:0043419">
    <property type="term" value="P:urea catabolic process"/>
    <property type="evidence" value="ECO:0007669"/>
    <property type="project" value="UniProtKB-UniRule"/>
</dbReference>
<dbReference type="CDD" id="cd00375">
    <property type="entry name" value="Urease_alpha"/>
    <property type="match status" value="1"/>
</dbReference>
<dbReference type="Gene3D" id="3.20.20.140">
    <property type="entry name" value="Metal-dependent hydrolases"/>
    <property type="match status" value="1"/>
</dbReference>
<dbReference type="Gene3D" id="2.30.40.10">
    <property type="entry name" value="Urease, subunit C, domain 1"/>
    <property type="match status" value="1"/>
</dbReference>
<dbReference type="HAMAP" id="MF_01953">
    <property type="entry name" value="Urease_alpha"/>
    <property type="match status" value="1"/>
</dbReference>
<dbReference type="InterPro" id="IPR006680">
    <property type="entry name" value="Amidohydro-rel"/>
</dbReference>
<dbReference type="InterPro" id="IPR011059">
    <property type="entry name" value="Metal-dep_hydrolase_composite"/>
</dbReference>
<dbReference type="InterPro" id="IPR032466">
    <property type="entry name" value="Metal_Hydrolase"/>
</dbReference>
<dbReference type="InterPro" id="IPR011612">
    <property type="entry name" value="Urease_alpha_N_dom"/>
</dbReference>
<dbReference type="InterPro" id="IPR050112">
    <property type="entry name" value="Urease_alpha_subunit"/>
</dbReference>
<dbReference type="InterPro" id="IPR017950">
    <property type="entry name" value="Urease_AS"/>
</dbReference>
<dbReference type="InterPro" id="IPR005848">
    <property type="entry name" value="Urease_asu"/>
</dbReference>
<dbReference type="InterPro" id="IPR017951">
    <property type="entry name" value="Urease_asu_c"/>
</dbReference>
<dbReference type="InterPro" id="IPR029754">
    <property type="entry name" value="Urease_Ni-bd"/>
</dbReference>
<dbReference type="NCBIfam" id="NF009685">
    <property type="entry name" value="PRK13206.1"/>
    <property type="match status" value="1"/>
</dbReference>
<dbReference type="NCBIfam" id="NF009686">
    <property type="entry name" value="PRK13207.1"/>
    <property type="match status" value="1"/>
</dbReference>
<dbReference type="NCBIfam" id="TIGR01792">
    <property type="entry name" value="urease_alph"/>
    <property type="match status" value="1"/>
</dbReference>
<dbReference type="PANTHER" id="PTHR43440">
    <property type="entry name" value="UREASE"/>
    <property type="match status" value="1"/>
</dbReference>
<dbReference type="PANTHER" id="PTHR43440:SF1">
    <property type="entry name" value="UREASE"/>
    <property type="match status" value="1"/>
</dbReference>
<dbReference type="Pfam" id="PF01979">
    <property type="entry name" value="Amidohydro_1"/>
    <property type="match status" value="1"/>
</dbReference>
<dbReference type="Pfam" id="PF00449">
    <property type="entry name" value="Urease_alpha"/>
    <property type="match status" value="1"/>
</dbReference>
<dbReference type="PRINTS" id="PR01752">
    <property type="entry name" value="UREASE"/>
</dbReference>
<dbReference type="SUPFAM" id="SSF51338">
    <property type="entry name" value="Composite domain of metallo-dependent hydrolases"/>
    <property type="match status" value="1"/>
</dbReference>
<dbReference type="SUPFAM" id="SSF51556">
    <property type="entry name" value="Metallo-dependent hydrolases"/>
    <property type="match status" value="1"/>
</dbReference>
<dbReference type="PROSITE" id="PS01120">
    <property type="entry name" value="UREASE_1"/>
    <property type="match status" value="1"/>
</dbReference>
<dbReference type="PROSITE" id="PS00145">
    <property type="entry name" value="UREASE_2"/>
    <property type="match status" value="1"/>
</dbReference>
<dbReference type="PROSITE" id="PS51368">
    <property type="entry name" value="UREASE_3"/>
    <property type="match status" value="1"/>
</dbReference>
<accession>A4WR75</accession>
<name>URE1_CERS5</name>
<proteinExistence type="inferred from homology"/>
<sequence length="568" mass="60377">MPASISRSTYAAMFGPTTGDRLRLGDTDLIIEVERDLTTYGEEVKFGGGKVIRDGMGQSQRTRADGAMDTVITNALILDWSGIYKADVGLRDGRIAKIGKAGNPDTQPGVDIVIGPGTEIIAGEGRILTAGGMDAHIHFICPQQIEDSLHSGITTMLGGGTGPAHGTLATTCTPGPWHIGRMLQAADAFPINLAFAGKGNASLPAGLEEQVRAGASCLKLHEDWGTTPAAIDCCLTVADAMDVQVMIHTDTLNESGFVENTLAAIGGRTIHAFHTEGAGGGHAPDIIKVVGAANVIPSSTNPTMPYTANTVEEHLDMLMVCHHLDRSIPEDVAFAESRIRKETIAAEDILHDMGAFSVISSDSQAMGRVGEVITRTWQTAHKMKVQRGRLAEETGANDNMRVRRYIAKYTINPAIAHGLSHHIGSVEEGKRADLVLWTPAFFGAKPDMVLLGGMIVCAQMGDPNGSIPAQPFYSRPMFGAFGGALHASAVTFVSQAAQADGVGERLRLQKGTLAVEGTRGIGKADMKLNAHRPAIEVNPETYEVRADGEILTCQPLAELPLAQRYFLY</sequence>
<comment type="catalytic activity">
    <reaction evidence="1">
        <text>urea + 2 H2O + H(+) = hydrogencarbonate + 2 NH4(+)</text>
        <dbReference type="Rhea" id="RHEA:20557"/>
        <dbReference type="ChEBI" id="CHEBI:15377"/>
        <dbReference type="ChEBI" id="CHEBI:15378"/>
        <dbReference type="ChEBI" id="CHEBI:16199"/>
        <dbReference type="ChEBI" id="CHEBI:17544"/>
        <dbReference type="ChEBI" id="CHEBI:28938"/>
        <dbReference type="EC" id="3.5.1.5"/>
    </reaction>
</comment>
<comment type="cofactor">
    <cofactor evidence="1">
        <name>Ni cation</name>
        <dbReference type="ChEBI" id="CHEBI:25516"/>
    </cofactor>
    <text evidence="1">Binds 2 nickel ions per subunit.</text>
</comment>
<comment type="pathway">
    <text evidence="1">Nitrogen metabolism; urea degradation; CO(2) and NH(3) from urea (urease route): step 1/1.</text>
</comment>
<comment type="subunit">
    <text evidence="1">Heterotrimer of UreA (gamma), UreB (beta) and UreC (alpha) subunits. Three heterotrimers associate to form the active enzyme.</text>
</comment>
<comment type="subcellular location">
    <subcellularLocation>
        <location evidence="1">Cytoplasm</location>
    </subcellularLocation>
</comment>
<comment type="PTM">
    <text evidence="1">Carboxylation allows a single lysine to coordinate two nickel ions.</text>
</comment>
<comment type="similarity">
    <text evidence="1">Belongs to the metallo-dependent hydrolases superfamily. Urease alpha subunit family.</text>
</comment>